<gene>
    <name evidence="1" type="primary">psuG1</name>
    <name type="ordered locus">RL2639</name>
</gene>
<organism>
    <name type="scientific">Rhizobium johnstonii (strain DSM 114642 / LMG 32736 / 3841)</name>
    <name type="common">Rhizobium leguminosarum bv. viciae</name>
    <dbReference type="NCBI Taxonomy" id="216596"/>
    <lineage>
        <taxon>Bacteria</taxon>
        <taxon>Pseudomonadati</taxon>
        <taxon>Pseudomonadota</taxon>
        <taxon>Alphaproteobacteria</taxon>
        <taxon>Hyphomicrobiales</taxon>
        <taxon>Rhizobiaceae</taxon>
        <taxon>Rhizobium/Agrobacterium group</taxon>
        <taxon>Rhizobium</taxon>
        <taxon>Rhizobium johnstonii</taxon>
    </lineage>
</organism>
<accession>Q1MFZ6</accession>
<reference key="1">
    <citation type="journal article" date="2006" name="Genome Biol.">
        <title>The genome of Rhizobium leguminosarum has recognizable core and accessory components.</title>
        <authorList>
            <person name="Young J.P.W."/>
            <person name="Crossman L.C."/>
            <person name="Johnston A.W.B."/>
            <person name="Thomson N.R."/>
            <person name="Ghazoui Z.F."/>
            <person name="Hull K.H."/>
            <person name="Wexler M."/>
            <person name="Curson A.R.J."/>
            <person name="Todd J.D."/>
            <person name="Poole P.S."/>
            <person name="Mauchline T.H."/>
            <person name="East A.K."/>
            <person name="Quail M.A."/>
            <person name="Churcher C."/>
            <person name="Arrowsmith C."/>
            <person name="Cherevach I."/>
            <person name="Chillingworth T."/>
            <person name="Clarke K."/>
            <person name="Cronin A."/>
            <person name="Davis P."/>
            <person name="Fraser A."/>
            <person name="Hance Z."/>
            <person name="Hauser H."/>
            <person name="Jagels K."/>
            <person name="Moule S."/>
            <person name="Mungall K."/>
            <person name="Norbertczak H."/>
            <person name="Rabbinowitsch E."/>
            <person name="Sanders M."/>
            <person name="Simmonds M."/>
            <person name="Whitehead S."/>
            <person name="Parkhill J."/>
        </authorList>
    </citation>
    <scope>NUCLEOTIDE SEQUENCE [LARGE SCALE GENOMIC DNA]</scope>
    <source>
        <strain>DSM 114642 / LMG 32736 / 3841</strain>
    </source>
</reference>
<protein>
    <recommendedName>
        <fullName evidence="1">Pseudouridine-5'-phosphate glycosidase 1</fullName>
        <shortName evidence="1">PsiMP glycosidase 1</shortName>
        <ecNumber evidence="1">4.2.1.70</ecNumber>
    </recommendedName>
</protein>
<name>PSUG1_RHIJ3</name>
<feature type="chain" id="PRO_0000390538" description="Pseudouridine-5'-phosphate glycosidase 1">
    <location>
        <begin position="1"/>
        <end position="317"/>
    </location>
</feature>
<feature type="active site" description="Proton donor" evidence="1">
    <location>
        <position position="40"/>
    </location>
</feature>
<feature type="active site" description="Nucleophile" evidence="1">
    <location>
        <position position="174"/>
    </location>
</feature>
<feature type="binding site" evidence="1">
    <location>
        <position position="101"/>
    </location>
    <ligand>
        <name>substrate</name>
    </ligand>
</feature>
<feature type="binding site" evidence="1">
    <location>
        <position position="121"/>
    </location>
    <ligand>
        <name>substrate</name>
    </ligand>
</feature>
<feature type="binding site" evidence="1">
    <location>
        <position position="153"/>
    </location>
    <ligand>
        <name>Mn(2+)</name>
        <dbReference type="ChEBI" id="CHEBI:29035"/>
    </ligand>
</feature>
<feature type="binding site" evidence="1">
    <location>
        <begin position="155"/>
        <end position="157"/>
    </location>
    <ligand>
        <name>substrate</name>
    </ligand>
</feature>
<dbReference type="EC" id="4.2.1.70" evidence="1"/>
<dbReference type="EMBL" id="AM236080">
    <property type="protein sequence ID" value="CAK08127.1"/>
    <property type="molecule type" value="Genomic_DNA"/>
</dbReference>
<dbReference type="SMR" id="Q1MFZ6"/>
<dbReference type="EnsemblBacteria" id="CAK08127">
    <property type="protein sequence ID" value="CAK08127"/>
    <property type="gene ID" value="RL2639"/>
</dbReference>
<dbReference type="KEGG" id="rle:RL2639"/>
<dbReference type="eggNOG" id="COG2313">
    <property type="taxonomic scope" value="Bacteria"/>
</dbReference>
<dbReference type="HOGENOM" id="CLU_012201_0_1_5"/>
<dbReference type="Proteomes" id="UP000006575">
    <property type="component" value="Chromosome"/>
</dbReference>
<dbReference type="GO" id="GO:0005737">
    <property type="term" value="C:cytoplasm"/>
    <property type="evidence" value="ECO:0007669"/>
    <property type="project" value="TreeGrafter"/>
</dbReference>
<dbReference type="GO" id="GO:0016798">
    <property type="term" value="F:hydrolase activity, acting on glycosyl bonds"/>
    <property type="evidence" value="ECO:0007669"/>
    <property type="project" value="UniProtKB-KW"/>
</dbReference>
<dbReference type="GO" id="GO:0046872">
    <property type="term" value="F:metal ion binding"/>
    <property type="evidence" value="ECO:0007669"/>
    <property type="project" value="UniProtKB-KW"/>
</dbReference>
<dbReference type="GO" id="GO:0004730">
    <property type="term" value="F:pseudouridylate synthase activity"/>
    <property type="evidence" value="ECO:0007669"/>
    <property type="project" value="UniProtKB-UniRule"/>
</dbReference>
<dbReference type="GO" id="GO:0046113">
    <property type="term" value="P:nucleobase catabolic process"/>
    <property type="evidence" value="ECO:0007669"/>
    <property type="project" value="UniProtKB-UniRule"/>
</dbReference>
<dbReference type="Gene3D" id="3.40.1790.10">
    <property type="entry name" value="Indigoidine synthase domain"/>
    <property type="match status" value="1"/>
</dbReference>
<dbReference type="HAMAP" id="MF_01876">
    <property type="entry name" value="PsiMP_glycosidase"/>
    <property type="match status" value="1"/>
</dbReference>
<dbReference type="InterPro" id="IPR022830">
    <property type="entry name" value="Indigdn_synthA-like"/>
</dbReference>
<dbReference type="InterPro" id="IPR007342">
    <property type="entry name" value="PsuG"/>
</dbReference>
<dbReference type="PANTHER" id="PTHR42909:SF1">
    <property type="entry name" value="CARBOHYDRATE KINASE PFKB DOMAIN-CONTAINING PROTEIN"/>
    <property type="match status" value="1"/>
</dbReference>
<dbReference type="PANTHER" id="PTHR42909">
    <property type="entry name" value="ZGC:136858"/>
    <property type="match status" value="1"/>
</dbReference>
<dbReference type="Pfam" id="PF04227">
    <property type="entry name" value="Indigoidine_A"/>
    <property type="match status" value="1"/>
</dbReference>
<dbReference type="SUPFAM" id="SSF110581">
    <property type="entry name" value="Indigoidine synthase A-like"/>
    <property type="match status" value="1"/>
</dbReference>
<sequence length="317" mass="33532">MLSRSQDKTMTKPISPLLPIAYSKEVASAKQRGAPLVALESTIITHGMPYPGNIEMARSVEAIIREQGAVPATIAVIHGTLHIGLEAAELEQLAKATEVMKVSRADLAFAIAERRTGATTVAATMIAAARAGIRVFATGGIGGVHRGAEESFDISADLEELARTGVIVVCAGAKAILDIPKTLEVLETRGVPVVTYESEEFPAFWSRSSGIRSPLSLNSPAAIANFQTVREQLGIDGGMLVANPVPEADEIASEEMEIYIERALDSAERDEVTGKAVTPYLLSTIFDLTDGQSLKTNIALVENNARLAAEIAVALGE</sequence>
<comment type="function">
    <text evidence="1">Catalyzes the reversible cleavage of pseudouridine 5'-phosphate (PsiMP) to ribose 5-phosphate and uracil. Functions biologically in the cleavage direction, as part of a pseudouridine degradation pathway.</text>
</comment>
<comment type="catalytic activity">
    <reaction evidence="1">
        <text>D-ribose 5-phosphate + uracil = psi-UMP + H2O</text>
        <dbReference type="Rhea" id="RHEA:18337"/>
        <dbReference type="ChEBI" id="CHEBI:15377"/>
        <dbReference type="ChEBI" id="CHEBI:17568"/>
        <dbReference type="ChEBI" id="CHEBI:58380"/>
        <dbReference type="ChEBI" id="CHEBI:78346"/>
        <dbReference type="EC" id="4.2.1.70"/>
    </reaction>
</comment>
<comment type="cofactor">
    <cofactor evidence="1">
        <name>Mn(2+)</name>
        <dbReference type="ChEBI" id="CHEBI:29035"/>
    </cofactor>
    <text evidence="1">Binds 1 Mn(2+) ion per subunit.</text>
</comment>
<comment type="subunit">
    <text evidence="1">Homotrimer.</text>
</comment>
<comment type="similarity">
    <text evidence="1">Belongs to the pseudouridine-5'-phosphate glycosidase family.</text>
</comment>
<proteinExistence type="inferred from homology"/>
<evidence type="ECO:0000255" key="1">
    <source>
        <dbReference type="HAMAP-Rule" id="MF_01876"/>
    </source>
</evidence>
<keyword id="KW-0326">Glycosidase</keyword>
<keyword id="KW-0378">Hydrolase</keyword>
<keyword id="KW-0456">Lyase</keyword>
<keyword id="KW-0464">Manganese</keyword>
<keyword id="KW-0479">Metal-binding</keyword>